<protein>
    <recommendedName>
        <fullName evidence="1">Pyrimidine/purine nucleoside phosphorylase</fullName>
        <ecNumber evidence="1">2.4.2.1</ecNumber>
        <ecNumber evidence="1">2.4.2.2</ecNumber>
    </recommendedName>
    <alternativeName>
        <fullName evidence="1">Adenosine phosphorylase</fullName>
    </alternativeName>
    <alternativeName>
        <fullName evidence="1">Cytidine phosphorylase</fullName>
    </alternativeName>
    <alternativeName>
        <fullName evidence="1">Guanosine phosphorylase</fullName>
    </alternativeName>
    <alternativeName>
        <fullName evidence="1">Inosine phosphorylase</fullName>
    </alternativeName>
    <alternativeName>
        <fullName evidence="1">Thymidine phosphorylase</fullName>
    </alternativeName>
    <alternativeName>
        <fullName evidence="1">Uridine phosphorylase</fullName>
    </alternativeName>
    <alternativeName>
        <fullName evidence="1">Xanthosine phosphorylase</fullName>
    </alternativeName>
</protein>
<name>PPNP_ALIFM</name>
<sequence>MLTVNSYFEDKVKSIGFEQNSNAISVGVMLPGNYTFGTAAAEKMSVITGALTIKRSTDADWVTFSSGEDFSVEGNSSFEVKVEIETAYLCEYL</sequence>
<organism>
    <name type="scientific">Aliivibrio fischeri (strain MJ11)</name>
    <name type="common">Vibrio fischeri</name>
    <dbReference type="NCBI Taxonomy" id="388396"/>
    <lineage>
        <taxon>Bacteria</taxon>
        <taxon>Pseudomonadati</taxon>
        <taxon>Pseudomonadota</taxon>
        <taxon>Gammaproteobacteria</taxon>
        <taxon>Vibrionales</taxon>
        <taxon>Vibrionaceae</taxon>
        <taxon>Aliivibrio</taxon>
    </lineage>
</organism>
<dbReference type="EC" id="2.4.2.1" evidence="1"/>
<dbReference type="EC" id="2.4.2.2" evidence="1"/>
<dbReference type="EMBL" id="CP001133">
    <property type="protein sequence ID" value="ACH64378.1"/>
    <property type="molecule type" value="Genomic_DNA"/>
</dbReference>
<dbReference type="RefSeq" id="WP_005422703.1">
    <property type="nucleotide sequence ID" value="NC_011186.1"/>
</dbReference>
<dbReference type="SMR" id="B5ETU8"/>
<dbReference type="GeneID" id="54165879"/>
<dbReference type="KEGG" id="vfm:VFMJ11_A0567"/>
<dbReference type="HOGENOM" id="CLU_157874_0_0_6"/>
<dbReference type="Proteomes" id="UP000001857">
    <property type="component" value="Chromosome II"/>
</dbReference>
<dbReference type="GO" id="GO:0005829">
    <property type="term" value="C:cytosol"/>
    <property type="evidence" value="ECO:0007669"/>
    <property type="project" value="TreeGrafter"/>
</dbReference>
<dbReference type="GO" id="GO:0047975">
    <property type="term" value="F:guanosine phosphorylase activity"/>
    <property type="evidence" value="ECO:0007669"/>
    <property type="project" value="UniProtKB-EC"/>
</dbReference>
<dbReference type="GO" id="GO:0004731">
    <property type="term" value="F:purine-nucleoside phosphorylase activity"/>
    <property type="evidence" value="ECO:0007669"/>
    <property type="project" value="UniProtKB-UniRule"/>
</dbReference>
<dbReference type="GO" id="GO:0009032">
    <property type="term" value="F:thymidine phosphorylase activity"/>
    <property type="evidence" value="ECO:0007669"/>
    <property type="project" value="UniProtKB-EC"/>
</dbReference>
<dbReference type="GO" id="GO:0004850">
    <property type="term" value="F:uridine phosphorylase activity"/>
    <property type="evidence" value="ECO:0007669"/>
    <property type="project" value="UniProtKB-EC"/>
</dbReference>
<dbReference type="FunFam" id="2.60.120.10:FF:000016">
    <property type="entry name" value="Pyrimidine/purine nucleoside phosphorylase"/>
    <property type="match status" value="1"/>
</dbReference>
<dbReference type="Gene3D" id="2.60.120.10">
    <property type="entry name" value="Jelly Rolls"/>
    <property type="match status" value="1"/>
</dbReference>
<dbReference type="HAMAP" id="MF_01537">
    <property type="entry name" value="Nucleos_phosphorylase_PpnP"/>
    <property type="match status" value="1"/>
</dbReference>
<dbReference type="InterPro" id="IPR009664">
    <property type="entry name" value="Ppnp"/>
</dbReference>
<dbReference type="InterPro" id="IPR014710">
    <property type="entry name" value="RmlC-like_jellyroll"/>
</dbReference>
<dbReference type="InterPro" id="IPR011051">
    <property type="entry name" value="RmlC_Cupin_sf"/>
</dbReference>
<dbReference type="PANTHER" id="PTHR36540">
    <property type="entry name" value="PYRIMIDINE/PURINE NUCLEOSIDE PHOSPHORYLASE"/>
    <property type="match status" value="1"/>
</dbReference>
<dbReference type="PANTHER" id="PTHR36540:SF1">
    <property type="entry name" value="PYRIMIDINE_PURINE NUCLEOSIDE PHOSPHORYLASE"/>
    <property type="match status" value="1"/>
</dbReference>
<dbReference type="Pfam" id="PF06865">
    <property type="entry name" value="Ppnp"/>
    <property type="match status" value="1"/>
</dbReference>
<dbReference type="SUPFAM" id="SSF51182">
    <property type="entry name" value="RmlC-like cupins"/>
    <property type="match status" value="1"/>
</dbReference>
<feature type="chain" id="PRO_1000198684" description="Pyrimidine/purine nucleoside phosphorylase">
    <location>
        <begin position="1"/>
        <end position="93"/>
    </location>
</feature>
<reference key="1">
    <citation type="submission" date="2008-08" db="EMBL/GenBank/DDBJ databases">
        <title>Complete sequence of Vibrio fischeri strain MJ11.</title>
        <authorList>
            <person name="Mandel M.J."/>
            <person name="Stabb E.V."/>
            <person name="Ruby E.G."/>
            <person name="Ferriera S."/>
            <person name="Johnson J."/>
            <person name="Kravitz S."/>
            <person name="Beeson K."/>
            <person name="Sutton G."/>
            <person name="Rogers Y.-H."/>
            <person name="Friedman R."/>
            <person name="Frazier M."/>
            <person name="Venter J.C."/>
        </authorList>
    </citation>
    <scope>NUCLEOTIDE SEQUENCE [LARGE SCALE GENOMIC DNA]</scope>
    <source>
        <strain>MJ11</strain>
    </source>
</reference>
<proteinExistence type="inferred from homology"/>
<gene>
    <name evidence="1" type="primary">ppnP</name>
    <name type="ordered locus">VFMJ11_A0567</name>
</gene>
<accession>B5ETU8</accession>
<evidence type="ECO:0000255" key="1">
    <source>
        <dbReference type="HAMAP-Rule" id="MF_01537"/>
    </source>
</evidence>
<keyword id="KW-0328">Glycosyltransferase</keyword>
<keyword id="KW-0808">Transferase</keyword>
<comment type="function">
    <text evidence="1">Catalyzes the phosphorolysis of diverse nucleosides, yielding D-ribose 1-phosphate and the respective free bases. Can use uridine, adenosine, guanosine, cytidine, thymidine, inosine and xanthosine as substrates. Also catalyzes the reverse reactions.</text>
</comment>
<comment type="catalytic activity">
    <reaction evidence="1">
        <text>a purine D-ribonucleoside + phosphate = a purine nucleobase + alpha-D-ribose 1-phosphate</text>
        <dbReference type="Rhea" id="RHEA:19805"/>
        <dbReference type="ChEBI" id="CHEBI:26386"/>
        <dbReference type="ChEBI" id="CHEBI:43474"/>
        <dbReference type="ChEBI" id="CHEBI:57720"/>
        <dbReference type="ChEBI" id="CHEBI:142355"/>
        <dbReference type="EC" id="2.4.2.1"/>
    </reaction>
</comment>
<comment type="catalytic activity">
    <reaction evidence="1">
        <text>adenosine + phosphate = alpha-D-ribose 1-phosphate + adenine</text>
        <dbReference type="Rhea" id="RHEA:27642"/>
        <dbReference type="ChEBI" id="CHEBI:16335"/>
        <dbReference type="ChEBI" id="CHEBI:16708"/>
        <dbReference type="ChEBI" id="CHEBI:43474"/>
        <dbReference type="ChEBI" id="CHEBI:57720"/>
        <dbReference type="EC" id="2.4.2.1"/>
    </reaction>
</comment>
<comment type="catalytic activity">
    <reaction evidence="1">
        <text>cytidine + phosphate = cytosine + alpha-D-ribose 1-phosphate</text>
        <dbReference type="Rhea" id="RHEA:52540"/>
        <dbReference type="ChEBI" id="CHEBI:16040"/>
        <dbReference type="ChEBI" id="CHEBI:17562"/>
        <dbReference type="ChEBI" id="CHEBI:43474"/>
        <dbReference type="ChEBI" id="CHEBI:57720"/>
        <dbReference type="EC" id="2.4.2.2"/>
    </reaction>
</comment>
<comment type="catalytic activity">
    <reaction evidence="1">
        <text>guanosine + phosphate = alpha-D-ribose 1-phosphate + guanine</text>
        <dbReference type="Rhea" id="RHEA:13233"/>
        <dbReference type="ChEBI" id="CHEBI:16235"/>
        <dbReference type="ChEBI" id="CHEBI:16750"/>
        <dbReference type="ChEBI" id="CHEBI:43474"/>
        <dbReference type="ChEBI" id="CHEBI:57720"/>
        <dbReference type="EC" id="2.4.2.1"/>
    </reaction>
</comment>
<comment type="catalytic activity">
    <reaction evidence="1">
        <text>inosine + phosphate = alpha-D-ribose 1-phosphate + hypoxanthine</text>
        <dbReference type="Rhea" id="RHEA:27646"/>
        <dbReference type="ChEBI" id="CHEBI:17368"/>
        <dbReference type="ChEBI" id="CHEBI:17596"/>
        <dbReference type="ChEBI" id="CHEBI:43474"/>
        <dbReference type="ChEBI" id="CHEBI:57720"/>
        <dbReference type="EC" id="2.4.2.1"/>
    </reaction>
</comment>
<comment type="catalytic activity">
    <reaction evidence="1">
        <text>thymidine + phosphate = 2-deoxy-alpha-D-ribose 1-phosphate + thymine</text>
        <dbReference type="Rhea" id="RHEA:16037"/>
        <dbReference type="ChEBI" id="CHEBI:17748"/>
        <dbReference type="ChEBI" id="CHEBI:17821"/>
        <dbReference type="ChEBI" id="CHEBI:43474"/>
        <dbReference type="ChEBI" id="CHEBI:57259"/>
        <dbReference type="EC" id="2.4.2.2"/>
    </reaction>
</comment>
<comment type="catalytic activity">
    <reaction evidence="1">
        <text>uridine + phosphate = alpha-D-ribose 1-phosphate + uracil</text>
        <dbReference type="Rhea" id="RHEA:24388"/>
        <dbReference type="ChEBI" id="CHEBI:16704"/>
        <dbReference type="ChEBI" id="CHEBI:17568"/>
        <dbReference type="ChEBI" id="CHEBI:43474"/>
        <dbReference type="ChEBI" id="CHEBI:57720"/>
        <dbReference type="EC" id="2.4.2.2"/>
    </reaction>
</comment>
<comment type="catalytic activity">
    <reaction evidence="1">
        <text>xanthosine + phosphate = alpha-D-ribose 1-phosphate + xanthine</text>
        <dbReference type="Rhea" id="RHEA:27638"/>
        <dbReference type="ChEBI" id="CHEBI:17712"/>
        <dbReference type="ChEBI" id="CHEBI:18107"/>
        <dbReference type="ChEBI" id="CHEBI:43474"/>
        <dbReference type="ChEBI" id="CHEBI:57720"/>
        <dbReference type="EC" id="2.4.2.1"/>
    </reaction>
</comment>
<comment type="similarity">
    <text evidence="1">Belongs to the nucleoside phosphorylase PpnP family.</text>
</comment>